<accession>A0A1I1P2K9</accession>
<feature type="chain" id="PRO_0000462058" description="Bacterial ISG15-like ubiquitin-like protein BilA">
    <location>
        <begin position="1"/>
        <end position="163"/>
    </location>
</feature>
<feature type="domain" description="Ubiquitin-like BIL-type 1" evidence="1">
    <location>
        <begin position="4"/>
        <end position="80"/>
    </location>
</feature>
<feature type="domain" description="Ubiquitin-like BIL-type 2" evidence="1">
    <location>
        <begin position="81"/>
        <end position="163"/>
    </location>
</feature>
<feature type="cross-link" description="Glycyl lysine isopeptide (Gly-Lys) (interchain with K-? in central tail fiber acceptor protein)" evidence="1 4">
    <location>
        <position position="163"/>
    </location>
</feature>
<feature type="mutagenesis site" description="No longer resistant to SECphi27, SECphi18, SECphi6, SECphi4, does not form a covalent linkage with BilD, phage tail proteins (from SECphi27, SECphi4 and T5) are not ubiquitinated, SECphi27 phage progeny are infective and have wild-type morphology." evidence="2">
    <original>G</original>
    <variation>L</variation>
    <location>
        <position position="163"/>
    </location>
</feature>
<comment type="function">
    <text evidence="2">Component of the Bil (bacterial ISG15-like) antiviral defense system, composed of BilA, BilB, BilC and BilD. The Bil system specifically conjugates a ubiquitin-like moiety (bilA) to the bacteriophage central tail fiber (CTF, or tip attachment protein J) via reactions involving E1 (bilD) and E2 (bilB). Modifies CTF of phage SECphi27 and SECphi4, which probably interferes with assembly of the phage tail. Also modifies T5 baseplate hub protein pb3 (gene D16), but not gp27 of phage T6 (Bil defends against T6). Bil-encoding bacteria produce mostly defective phage SECphi27, many of which have phage assembly defects, including no tails. SECphi27 phage progeny produced in E.coli with the Bil system inject less DNA into naive host cells, maybe because the phage are less able to adsorb and inject their DNA into host cells.</text>
</comment>
<comment type="function">
    <text evidence="2">Expression of the Bil system in E.coli (strain MG1655) confers about 100-fold resistance to phage SECphi27, SECphi18, SECphi6, SECphi4 and T5, but not to SECphi17. When cells expressing the Bil system are infected by phage SECphi27 at low multiplicity of infection (0.03 MOI) the culture survives, at 3.0 MOI the culture collapses at the same time as cells without the Bil system.</text>
</comment>
<protein>
    <recommendedName>
        <fullName evidence="3">Bacterial ISG15-like ubiquitin-like protein BilA</fullName>
    </recommendedName>
</protein>
<dbReference type="EMBL" id="FOLC01000019">
    <property type="protein sequence ID" value="SFD01203.1"/>
    <property type="molecule type" value="Genomic_DNA"/>
</dbReference>
<dbReference type="RefSeq" id="WP_092399447.1">
    <property type="nucleotide sequence ID" value="NZ_FOLC01000019.1"/>
</dbReference>
<dbReference type="SMR" id="A0A1I1P2K9"/>
<dbReference type="STRING" id="1801619.SAMN04515619_11958"/>
<dbReference type="OrthoDB" id="9114202at2"/>
<dbReference type="Proteomes" id="UP000199381">
    <property type="component" value="Unassembled WGS sequence"/>
</dbReference>
<dbReference type="GO" id="GO:0051607">
    <property type="term" value="P:defense response to virus"/>
    <property type="evidence" value="ECO:0000314"/>
    <property type="project" value="UniProtKB"/>
</dbReference>
<dbReference type="GO" id="GO:0032446">
    <property type="term" value="P:protein modification by small protein conjugation"/>
    <property type="evidence" value="ECO:0000314"/>
    <property type="project" value="UniProtKB"/>
</dbReference>
<dbReference type="PROSITE" id="PS52055">
    <property type="entry name" value="UBL_BIL"/>
    <property type="match status" value="2"/>
</dbReference>
<gene>
    <name evidence="3" type="primary">bilA</name>
    <name evidence="5" type="ORF">SAMN04515619_11958</name>
</gene>
<sequence length="163" mass="17923">MTTLVVFIQVQGRPGIIETKLGPATTIGELKAALAAVGVNIDVETFIYVEDAENHLHGEHHEPAYGVKHGCRIHVSRCKRIRATVHYLDKTETRDFAPGARIRAVKAHAVDVFHIPPKDAGEHVLQLCNSLERPASDTPLHTLADHNTCAVCFDLVPEKRIEG</sequence>
<reference evidence="5" key="1">
    <citation type="submission" date="2016-10" db="EMBL/GenBank/DDBJ databases">
        <authorList>
            <person name="de Groot N.N."/>
        </authorList>
    </citation>
    <scope>NUCLEOTIDE SEQUENCE [LARGE SCALE GENOMIC DNA]</scope>
    <source>
        <strain>OK412</strain>
    </source>
</reference>
<reference key="2">
    <citation type="journal article" date="2024" name="Nature">
        <title>Bacteria conjugate ubiquitin-like proteins to interfere with phage assembly.</title>
        <authorList>
            <person name="Hoer J."/>
            <person name="Wolf S.G."/>
            <person name="Sorek R."/>
        </authorList>
    </citation>
    <scope>FUNCTION</scope>
    <scope>MUTAGENESIS OF GLY-163</scope>
</reference>
<organism>
    <name type="scientific">Collimonas sp. (strain OK412)</name>
    <dbReference type="NCBI Taxonomy" id="1801619"/>
    <lineage>
        <taxon>Bacteria</taxon>
        <taxon>Pseudomonadati</taxon>
        <taxon>Pseudomonadota</taxon>
        <taxon>Betaproteobacteria</taxon>
        <taxon>Burkholderiales</taxon>
        <taxon>Oxalobacteraceae</taxon>
        <taxon>Collimonas</taxon>
    </lineage>
</organism>
<evidence type="ECO:0000255" key="1">
    <source>
        <dbReference type="PROSITE-ProRule" id="PRU01400"/>
    </source>
</evidence>
<evidence type="ECO:0000269" key="2">
    <source>
    </source>
</evidence>
<evidence type="ECO:0000303" key="3">
    <source>
    </source>
</evidence>
<evidence type="ECO:0000305" key="4">
    <source>
    </source>
</evidence>
<evidence type="ECO:0000312" key="5">
    <source>
        <dbReference type="EMBL" id="SFD01203.1"/>
    </source>
</evidence>
<keyword id="KW-0051">Antiviral defense</keyword>
<keyword id="KW-1017">Isopeptide bond</keyword>
<keyword id="KW-0677">Repeat</keyword>
<keyword id="KW-0833">Ubl conjugation pathway</keyword>
<name>BILA_COLS4</name>
<proteinExistence type="evidence at protein level"/>